<keyword id="KW-0002">3D-structure</keyword>
<keyword id="KW-0007">Acetylation</keyword>
<keyword id="KW-0496">Mitochondrion</keyword>
<keyword id="KW-1185">Reference proteome</keyword>
<keyword id="KW-0687">Ribonucleoprotein</keyword>
<keyword id="KW-0689">Ribosomal protein</keyword>
<keyword id="KW-0809">Transit peptide</keyword>
<accession>Q80ZS3</accession>
<gene>
    <name type="primary">Mrps26</name>
</gene>
<protein>
    <recommendedName>
        <fullName evidence="4">Small ribosomal subunit protein mS26</fullName>
    </recommendedName>
    <alternativeName>
        <fullName>28S ribosomal protein S26, mitochondrial</fullName>
        <shortName>MRP-S26</shortName>
        <shortName>S26mt</shortName>
    </alternativeName>
</protein>
<organism>
    <name type="scientific">Mus musculus</name>
    <name type="common">Mouse</name>
    <dbReference type="NCBI Taxonomy" id="10090"/>
    <lineage>
        <taxon>Eukaryota</taxon>
        <taxon>Metazoa</taxon>
        <taxon>Chordata</taxon>
        <taxon>Craniata</taxon>
        <taxon>Vertebrata</taxon>
        <taxon>Euteleostomi</taxon>
        <taxon>Mammalia</taxon>
        <taxon>Eutheria</taxon>
        <taxon>Euarchontoglires</taxon>
        <taxon>Glires</taxon>
        <taxon>Rodentia</taxon>
        <taxon>Myomorpha</taxon>
        <taxon>Muroidea</taxon>
        <taxon>Muridae</taxon>
        <taxon>Murinae</taxon>
        <taxon>Mus</taxon>
        <taxon>Mus</taxon>
    </lineage>
</organism>
<dbReference type="EMBL" id="AL731707">
    <property type="status" value="NOT_ANNOTATED_CDS"/>
    <property type="molecule type" value="Genomic_DNA"/>
</dbReference>
<dbReference type="EMBL" id="BC048517">
    <property type="protein sequence ID" value="AAH48517.1"/>
    <property type="molecule type" value="mRNA"/>
</dbReference>
<dbReference type="CCDS" id="CCDS16744.1"/>
<dbReference type="RefSeq" id="NP_997090.1">
    <property type="nucleotide sequence ID" value="NM_207207.1"/>
</dbReference>
<dbReference type="PDB" id="7PNT">
    <property type="method" value="EM"/>
    <property type="resolution" value="3.19 A"/>
    <property type="chains" value="U=1-200"/>
</dbReference>
<dbReference type="PDB" id="7PNU">
    <property type="method" value="EM"/>
    <property type="resolution" value="3.06 A"/>
    <property type="chains" value="U=1-200"/>
</dbReference>
<dbReference type="PDB" id="7PNV">
    <property type="method" value="EM"/>
    <property type="resolution" value="3.06 A"/>
    <property type="chains" value="U=1-200"/>
</dbReference>
<dbReference type="PDB" id="7PNW">
    <property type="method" value="EM"/>
    <property type="resolution" value="3.09 A"/>
    <property type="chains" value="U=1-200"/>
</dbReference>
<dbReference type="PDBsum" id="7PNT"/>
<dbReference type="PDBsum" id="7PNU"/>
<dbReference type="PDBsum" id="7PNV"/>
<dbReference type="PDBsum" id="7PNW"/>
<dbReference type="EMDB" id="EMD-13551"/>
<dbReference type="EMDB" id="EMD-13552"/>
<dbReference type="EMDB" id="EMD-13553"/>
<dbReference type="EMDB" id="EMD-13554"/>
<dbReference type="SMR" id="Q80ZS3"/>
<dbReference type="BioGRID" id="221177">
    <property type="interactions" value="11"/>
</dbReference>
<dbReference type="ComplexPortal" id="CPX-5301">
    <property type="entry name" value="28S mitochondrial small ribosomal subunit"/>
</dbReference>
<dbReference type="FunCoup" id="Q80ZS3">
    <property type="interactions" value="1409"/>
</dbReference>
<dbReference type="STRING" id="10090.ENSMUSP00000123324"/>
<dbReference type="iPTMnet" id="Q80ZS3"/>
<dbReference type="PhosphoSitePlus" id="Q80ZS3"/>
<dbReference type="jPOST" id="Q80ZS3"/>
<dbReference type="PaxDb" id="10090-ENSMUSP00000123324"/>
<dbReference type="PeptideAtlas" id="Q80ZS3"/>
<dbReference type="ProteomicsDB" id="256797"/>
<dbReference type="Pumba" id="Q80ZS3"/>
<dbReference type="Antibodypedia" id="48846">
    <property type="antibodies" value="98 antibodies from 25 providers"/>
</dbReference>
<dbReference type="DNASU" id="99045"/>
<dbReference type="Ensembl" id="ENSMUST00000145614.2">
    <property type="protein sequence ID" value="ENSMUSP00000123324.2"/>
    <property type="gene ID" value="ENSMUSG00000037740.9"/>
</dbReference>
<dbReference type="GeneID" id="99045"/>
<dbReference type="KEGG" id="mmu:99045"/>
<dbReference type="UCSC" id="uc008mjf.1">
    <property type="organism name" value="mouse"/>
</dbReference>
<dbReference type="AGR" id="MGI:1333830"/>
<dbReference type="CTD" id="64949"/>
<dbReference type="MGI" id="MGI:1333830">
    <property type="gene designation" value="Mrps26"/>
</dbReference>
<dbReference type="VEuPathDB" id="HostDB:ENSMUSG00000037740"/>
<dbReference type="eggNOG" id="KOG4691">
    <property type="taxonomic scope" value="Eukaryota"/>
</dbReference>
<dbReference type="GeneTree" id="ENSGT00390000008453"/>
<dbReference type="HOGENOM" id="CLU_104778_0_0_1"/>
<dbReference type="InParanoid" id="Q80ZS3"/>
<dbReference type="OMA" id="AWVQLKE"/>
<dbReference type="OrthoDB" id="5988811at2759"/>
<dbReference type="PhylomeDB" id="Q80ZS3"/>
<dbReference type="TreeFam" id="TF316309"/>
<dbReference type="Reactome" id="R-MMU-5389840">
    <property type="pathway name" value="Mitochondrial translation elongation"/>
</dbReference>
<dbReference type="Reactome" id="R-MMU-5419276">
    <property type="pathway name" value="Mitochondrial translation termination"/>
</dbReference>
<dbReference type="BioGRID-ORCS" id="99045">
    <property type="hits" value="19 hits in 80 CRISPR screens"/>
</dbReference>
<dbReference type="ChiTaRS" id="Mrps26">
    <property type="organism name" value="mouse"/>
</dbReference>
<dbReference type="PRO" id="PR:Q80ZS3"/>
<dbReference type="Proteomes" id="UP000000589">
    <property type="component" value="Chromosome 2"/>
</dbReference>
<dbReference type="RNAct" id="Q80ZS3">
    <property type="molecule type" value="protein"/>
</dbReference>
<dbReference type="Bgee" id="ENSMUSG00000037740">
    <property type="expression patterns" value="Expressed in supraoptic nucleus and 266 other cell types or tissues"/>
</dbReference>
<dbReference type="GO" id="GO:0005743">
    <property type="term" value="C:mitochondrial inner membrane"/>
    <property type="evidence" value="ECO:0000303"/>
    <property type="project" value="ComplexPortal"/>
</dbReference>
<dbReference type="GO" id="GO:0005763">
    <property type="term" value="C:mitochondrial small ribosomal subunit"/>
    <property type="evidence" value="ECO:0000250"/>
    <property type="project" value="UniProtKB"/>
</dbReference>
<dbReference type="GO" id="GO:0005739">
    <property type="term" value="C:mitochondrion"/>
    <property type="evidence" value="ECO:0007005"/>
    <property type="project" value="MGI"/>
</dbReference>
<dbReference type="GO" id="GO:0005654">
    <property type="term" value="C:nucleoplasm"/>
    <property type="evidence" value="ECO:0007669"/>
    <property type="project" value="Ensembl"/>
</dbReference>
<dbReference type="GO" id="GO:0032543">
    <property type="term" value="P:mitochondrial translation"/>
    <property type="evidence" value="ECO:0000303"/>
    <property type="project" value="ComplexPortal"/>
</dbReference>
<dbReference type="InterPro" id="IPR026140">
    <property type="entry name" value="Ribosomal_mS26"/>
</dbReference>
<dbReference type="PANTHER" id="PTHR21035">
    <property type="entry name" value="28S RIBOSOMAL PROTEIN S26, MITOCHONDRIAL"/>
    <property type="match status" value="1"/>
</dbReference>
<dbReference type="PANTHER" id="PTHR21035:SF2">
    <property type="entry name" value="SMALL RIBOSOMAL SUBUNIT PROTEIN MS26"/>
    <property type="match status" value="1"/>
</dbReference>
<dbReference type="Pfam" id="PF14943">
    <property type="entry name" value="MRP-S26"/>
    <property type="match status" value="1"/>
</dbReference>
<reference key="1">
    <citation type="journal article" date="2009" name="PLoS Biol.">
        <title>Lineage-specific biology revealed by a finished genome assembly of the mouse.</title>
        <authorList>
            <person name="Church D.M."/>
            <person name="Goodstadt L."/>
            <person name="Hillier L.W."/>
            <person name="Zody M.C."/>
            <person name="Goldstein S."/>
            <person name="She X."/>
            <person name="Bult C.J."/>
            <person name="Agarwala R."/>
            <person name="Cherry J.L."/>
            <person name="DiCuccio M."/>
            <person name="Hlavina W."/>
            <person name="Kapustin Y."/>
            <person name="Meric P."/>
            <person name="Maglott D."/>
            <person name="Birtle Z."/>
            <person name="Marques A.C."/>
            <person name="Graves T."/>
            <person name="Zhou S."/>
            <person name="Teague B."/>
            <person name="Potamousis K."/>
            <person name="Churas C."/>
            <person name="Place M."/>
            <person name="Herschleb J."/>
            <person name="Runnheim R."/>
            <person name="Forrest D."/>
            <person name="Amos-Landgraf J."/>
            <person name="Schwartz D.C."/>
            <person name="Cheng Z."/>
            <person name="Lindblad-Toh K."/>
            <person name="Eichler E.E."/>
            <person name="Ponting C.P."/>
        </authorList>
    </citation>
    <scope>NUCLEOTIDE SEQUENCE [LARGE SCALE GENOMIC DNA]</scope>
    <source>
        <strain>C57BL/6J</strain>
    </source>
</reference>
<reference key="2">
    <citation type="journal article" date="2004" name="Genome Res.">
        <title>The status, quality, and expansion of the NIH full-length cDNA project: the Mammalian Gene Collection (MGC).</title>
        <authorList>
            <consortium name="The MGC Project Team"/>
        </authorList>
    </citation>
    <scope>NUCLEOTIDE SEQUENCE [LARGE SCALE MRNA]</scope>
    <source>
        <tissue>Testis</tissue>
    </source>
</reference>
<reference key="3">
    <citation type="journal article" date="2010" name="Cell">
        <title>A tissue-specific atlas of mouse protein phosphorylation and expression.</title>
        <authorList>
            <person name="Huttlin E.L."/>
            <person name="Jedrychowski M.P."/>
            <person name="Elias J.E."/>
            <person name="Goswami T."/>
            <person name="Rad R."/>
            <person name="Beausoleil S.A."/>
            <person name="Villen J."/>
            <person name="Haas W."/>
            <person name="Sowa M.E."/>
            <person name="Gygi S.P."/>
        </authorList>
    </citation>
    <scope>IDENTIFICATION BY MASS SPECTROMETRY [LARGE SCALE ANALYSIS]</scope>
    <source>
        <tissue>Brain</tissue>
        <tissue>Brown adipose tissue</tissue>
        <tissue>Heart</tissue>
        <tissue>Kidney</tissue>
        <tissue>Liver</tissue>
        <tissue>Spleen</tissue>
        <tissue>Testis</tissue>
    </source>
</reference>
<reference key="4">
    <citation type="journal article" date="2013" name="Proc. Natl. Acad. Sci. U.S.A.">
        <title>Label-free quantitative proteomics of the lysine acetylome in mitochondria identifies substrates of SIRT3 in metabolic pathways.</title>
        <authorList>
            <person name="Rardin M.J."/>
            <person name="Newman J.C."/>
            <person name="Held J.M."/>
            <person name="Cusack M.P."/>
            <person name="Sorensen D.J."/>
            <person name="Li B."/>
            <person name="Schilling B."/>
            <person name="Mooney S.D."/>
            <person name="Kahn C.R."/>
            <person name="Verdin E."/>
            <person name="Gibson B.W."/>
        </authorList>
    </citation>
    <scope>ACETYLATION [LARGE SCALE ANALYSIS] AT LYS-159</scope>
    <scope>IDENTIFICATION BY MASS SPECTROMETRY [LARGE SCALE ANALYSIS]</scope>
    <source>
        <tissue>Liver</tissue>
    </source>
</reference>
<proteinExistence type="evidence at protein level"/>
<sequence>MLRALNRLAARPETRPPTPLLLPVRGRKTRHDPPAKSKVGRVQTPPAVDPAEFFVLTERYRQYRETVRALRLEFTLEVRRKLHEARAGVLAERKAQQAITEHRELMAWNRDENRRMQELRIARLQLEAQAQEVQKAEAQAQRAQEEQAWVQLKEQEVLKLQEEAKNFITRENLEARIEEALDSPKSYNWAVTKEGQVVRN</sequence>
<evidence type="ECO:0000250" key="1"/>
<evidence type="ECO:0000250" key="2">
    <source>
        <dbReference type="UniProtKB" id="Q3SZ86"/>
    </source>
</evidence>
<evidence type="ECO:0000256" key="3">
    <source>
        <dbReference type="SAM" id="MobiDB-lite"/>
    </source>
</evidence>
<evidence type="ECO:0000305" key="4"/>
<evidence type="ECO:0007744" key="5">
    <source>
    </source>
</evidence>
<comment type="subunit">
    <text evidence="2">Component of the mitochondrial ribosome small subunit (28S) which comprises a 12S rRNA and about 30 distinct proteins.</text>
</comment>
<comment type="subcellular location">
    <subcellularLocation>
        <location evidence="2">Mitochondrion</location>
    </subcellularLocation>
</comment>
<comment type="similarity">
    <text evidence="4">Belongs to the mitochondrion-specific ribosomal protein mS26 family.</text>
</comment>
<feature type="transit peptide" description="Mitochondrion" evidence="1">
    <location>
        <begin position="1"/>
        <end position="27"/>
    </location>
</feature>
<feature type="chain" id="PRO_0000283815" description="Small ribosomal subunit protein mS26">
    <location>
        <begin position="28"/>
        <end position="200"/>
    </location>
</feature>
<feature type="region of interest" description="Disordered" evidence="3">
    <location>
        <begin position="1"/>
        <end position="44"/>
    </location>
</feature>
<feature type="modified residue" description="N6-acetyllysine" evidence="5">
    <location>
        <position position="159"/>
    </location>
</feature>
<name>RT26_MOUSE</name>